<name>EX7S_BACCQ</name>
<reference key="1">
    <citation type="journal article" date="2009" name="J. Bacteriol.">
        <title>Complete genome sequence of the extremophilic Bacillus cereus strain Q1 with industrial applications.</title>
        <authorList>
            <person name="Xiong Z."/>
            <person name="Jiang Y."/>
            <person name="Qi D."/>
            <person name="Lu H."/>
            <person name="Yang F."/>
            <person name="Yang J."/>
            <person name="Chen L."/>
            <person name="Sun L."/>
            <person name="Xu X."/>
            <person name="Xue Y."/>
            <person name="Zhu Y."/>
            <person name="Jin Q."/>
        </authorList>
    </citation>
    <scope>NUCLEOTIDE SEQUENCE [LARGE SCALE GENOMIC DNA]</scope>
    <source>
        <strain>Q1</strain>
    </source>
</reference>
<protein>
    <recommendedName>
        <fullName evidence="1">Exodeoxyribonuclease 7 small subunit</fullName>
        <ecNumber evidence="1">3.1.11.6</ecNumber>
    </recommendedName>
    <alternativeName>
        <fullName evidence="1">Exodeoxyribonuclease VII small subunit</fullName>
        <shortName evidence="1">Exonuclease VII small subunit</shortName>
    </alternativeName>
</protein>
<dbReference type="EC" id="3.1.11.6" evidence="1"/>
<dbReference type="EMBL" id="CP000227">
    <property type="protein sequence ID" value="ACM14393.1"/>
    <property type="molecule type" value="Genomic_DNA"/>
</dbReference>
<dbReference type="SMR" id="B9IXH2"/>
<dbReference type="KEGG" id="bcq:BCQ_3965"/>
<dbReference type="HOGENOM" id="CLU_145918_3_1_9"/>
<dbReference type="Proteomes" id="UP000000441">
    <property type="component" value="Chromosome"/>
</dbReference>
<dbReference type="GO" id="GO:0005829">
    <property type="term" value="C:cytosol"/>
    <property type="evidence" value="ECO:0007669"/>
    <property type="project" value="TreeGrafter"/>
</dbReference>
<dbReference type="GO" id="GO:0009318">
    <property type="term" value="C:exodeoxyribonuclease VII complex"/>
    <property type="evidence" value="ECO:0007669"/>
    <property type="project" value="InterPro"/>
</dbReference>
<dbReference type="GO" id="GO:0008855">
    <property type="term" value="F:exodeoxyribonuclease VII activity"/>
    <property type="evidence" value="ECO:0007669"/>
    <property type="project" value="UniProtKB-UniRule"/>
</dbReference>
<dbReference type="GO" id="GO:0006308">
    <property type="term" value="P:DNA catabolic process"/>
    <property type="evidence" value="ECO:0007669"/>
    <property type="project" value="UniProtKB-UniRule"/>
</dbReference>
<dbReference type="FunFam" id="1.10.287.1040:FF:000002">
    <property type="entry name" value="Exodeoxyribonuclease 7 small subunit"/>
    <property type="match status" value="1"/>
</dbReference>
<dbReference type="Gene3D" id="1.10.287.1040">
    <property type="entry name" value="Exonuclease VII, small subunit"/>
    <property type="match status" value="1"/>
</dbReference>
<dbReference type="HAMAP" id="MF_00337">
    <property type="entry name" value="Exonuc_7_S"/>
    <property type="match status" value="1"/>
</dbReference>
<dbReference type="InterPro" id="IPR003761">
    <property type="entry name" value="Exonuc_VII_S"/>
</dbReference>
<dbReference type="InterPro" id="IPR037004">
    <property type="entry name" value="Exonuc_VII_ssu_sf"/>
</dbReference>
<dbReference type="NCBIfam" id="NF010666">
    <property type="entry name" value="PRK14063.1"/>
    <property type="match status" value="1"/>
</dbReference>
<dbReference type="NCBIfam" id="TIGR01280">
    <property type="entry name" value="xseB"/>
    <property type="match status" value="1"/>
</dbReference>
<dbReference type="PANTHER" id="PTHR34137">
    <property type="entry name" value="EXODEOXYRIBONUCLEASE 7 SMALL SUBUNIT"/>
    <property type="match status" value="1"/>
</dbReference>
<dbReference type="PANTHER" id="PTHR34137:SF1">
    <property type="entry name" value="EXODEOXYRIBONUCLEASE 7 SMALL SUBUNIT"/>
    <property type="match status" value="1"/>
</dbReference>
<dbReference type="Pfam" id="PF02609">
    <property type="entry name" value="Exonuc_VII_S"/>
    <property type="match status" value="1"/>
</dbReference>
<dbReference type="PIRSF" id="PIRSF006488">
    <property type="entry name" value="Exonuc_VII_S"/>
    <property type="match status" value="1"/>
</dbReference>
<dbReference type="SUPFAM" id="SSF116842">
    <property type="entry name" value="XseB-like"/>
    <property type="match status" value="1"/>
</dbReference>
<organism>
    <name type="scientific">Bacillus cereus (strain Q1)</name>
    <dbReference type="NCBI Taxonomy" id="361100"/>
    <lineage>
        <taxon>Bacteria</taxon>
        <taxon>Bacillati</taxon>
        <taxon>Bacillota</taxon>
        <taxon>Bacilli</taxon>
        <taxon>Bacillales</taxon>
        <taxon>Bacillaceae</taxon>
        <taxon>Bacillus</taxon>
        <taxon>Bacillus cereus group</taxon>
    </lineage>
</organism>
<sequence length="76" mass="8516">MENKLSFEEAISQLEHLVSKLEQGDVPLEEAISYFKEGMELSKLCDEKLKNVQEQMAVILGEDGELEPFTALGDEA</sequence>
<accession>B9IXH2</accession>
<feature type="chain" id="PRO_1000200244" description="Exodeoxyribonuclease 7 small subunit">
    <location>
        <begin position="1"/>
        <end position="76"/>
    </location>
</feature>
<evidence type="ECO:0000255" key="1">
    <source>
        <dbReference type="HAMAP-Rule" id="MF_00337"/>
    </source>
</evidence>
<keyword id="KW-0963">Cytoplasm</keyword>
<keyword id="KW-0269">Exonuclease</keyword>
<keyword id="KW-0378">Hydrolase</keyword>
<keyword id="KW-0540">Nuclease</keyword>
<gene>
    <name evidence="1" type="primary">xseB</name>
    <name type="ordered locus">BCQ_3965</name>
</gene>
<comment type="function">
    <text evidence="1">Bidirectionally degrades single-stranded DNA into large acid-insoluble oligonucleotides, which are then degraded further into small acid-soluble oligonucleotides.</text>
</comment>
<comment type="catalytic activity">
    <reaction evidence="1">
        <text>Exonucleolytic cleavage in either 5'- to 3'- or 3'- to 5'-direction to yield nucleoside 5'-phosphates.</text>
        <dbReference type="EC" id="3.1.11.6"/>
    </reaction>
</comment>
<comment type="subunit">
    <text evidence="1">Heterooligomer composed of large and small subunits.</text>
</comment>
<comment type="subcellular location">
    <subcellularLocation>
        <location evidence="1">Cytoplasm</location>
    </subcellularLocation>
</comment>
<comment type="similarity">
    <text evidence="1">Belongs to the XseB family.</text>
</comment>
<proteinExistence type="inferred from homology"/>